<feature type="chain" id="PRO_0000218731" description="Protovillin">
    <location>
        <begin position="1"/>
        <end position="959"/>
    </location>
</feature>
<feature type="repeat" description="Gelsolin-like 1">
    <location>
        <begin position="64"/>
        <end position="116"/>
    </location>
</feature>
<feature type="repeat" description="Gelsolin-like 2">
    <location>
        <begin position="204"/>
        <end position="244"/>
    </location>
</feature>
<feature type="repeat" description="Gelsolin-like 3">
    <location>
        <begin position="309"/>
        <end position="366"/>
    </location>
</feature>
<feature type="repeat" description="Gelsolin-like 4">
    <location>
        <begin position="479"/>
        <end position="529"/>
    </location>
</feature>
<feature type="repeat" description="Gelsolin-like 5">
    <location>
        <begin position="603"/>
        <end position="647"/>
    </location>
</feature>
<feature type="repeat" description="Gelsolin-like 6">
    <location>
        <begin position="713"/>
        <end position="754"/>
    </location>
</feature>
<feature type="repeat" description="1">
    <location>
        <begin position="840"/>
        <end position="849"/>
    </location>
</feature>
<feature type="repeat" description="2">
    <location>
        <begin position="851"/>
        <end position="860"/>
    </location>
</feature>
<feature type="domain" description="HP" evidence="1">
    <location>
        <begin position="895"/>
        <end position="959"/>
    </location>
</feature>
<feature type="region of interest" description="Tail">
    <location>
        <begin position="1"/>
        <end position="53"/>
    </location>
</feature>
<feature type="region of interest" description="Core">
    <location>
        <begin position="54"/>
        <end position="832"/>
    </location>
</feature>
<feature type="region of interest" description="2 X 10 AA repeats of T-P-K-P-I-T-T-P-T-V">
    <location>
        <begin position="840"/>
        <end position="860"/>
    </location>
</feature>
<organism>
    <name type="scientific">Dictyostelium discoideum</name>
    <name type="common">Social amoeba</name>
    <dbReference type="NCBI Taxonomy" id="44689"/>
    <lineage>
        <taxon>Eukaryota</taxon>
        <taxon>Amoebozoa</taxon>
        <taxon>Evosea</taxon>
        <taxon>Eumycetozoa</taxon>
        <taxon>Dictyostelia</taxon>
        <taxon>Dictyosteliales</taxon>
        <taxon>Dictyosteliaceae</taxon>
        <taxon>Dictyostelium</taxon>
    </lineage>
</organism>
<accession>P36418</accession>
<accession>Q551N4</accession>
<reference key="1">
    <citation type="journal article" date="1993" name="FEBS Lett.">
        <title>The 100 kDa F-actin capping protein of Dictyostelium amoebae is a villin prototype ('protovillin').</title>
        <authorList>
            <person name="Hofmann A."/>
            <person name="Noegel A.A."/>
            <person name="Bomblies L."/>
            <person name="Lottspeich F."/>
            <person name="Schleicher M."/>
        </authorList>
    </citation>
    <scope>NUCLEOTIDE SEQUENCE [GENOMIC DNA]</scope>
    <scope>PROTEIN SEQUENCE OF 569-586 AND 843-853</scope>
    <source>
        <strain>AX2</strain>
        <strain>AX3</strain>
    </source>
</reference>
<reference key="2">
    <citation type="journal article" date="2002" name="Nature">
        <title>Sequence and analysis of chromosome 2 of Dictyostelium discoideum.</title>
        <authorList>
            <person name="Gloeckner G."/>
            <person name="Eichinger L."/>
            <person name="Szafranski K."/>
            <person name="Pachebat J.A."/>
            <person name="Bankier A.T."/>
            <person name="Dear P.H."/>
            <person name="Lehmann R."/>
            <person name="Baumgart C."/>
            <person name="Parra G."/>
            <person name="Abril J.F."/>
            <person name="Guigo R."/>
            <person name="Kumpf K."/>
            <person name="Tunggal B."/>
            <person name="Cox E.C."/>
            <person name="Quail M.A."/>
            <person name="Platzer M."/>
            <person name="Rosenthal A."/>
            <person name="Noegel A.A."/>
        </authorList>
    </citation>
    <scope>NUCLEOTIDE SEQUENCE [LARGE SCALE GENOMIC DNA]</scope>
    <source>
        <strain>AX4</strain>
    </source>
</reference>
<reference key="3">
    <citation type="journal article" date="2005" name="Nature">
        <title>The genome of the social amoeba Dictyostelium discoideum.</title>
        <authorList>
            <person name="Eichinger L."/>
            <person name="Pachebat J.A."/>
            <person name="Gloeckner G."/>
            <person name="Rajandream M.A."/>
            <person name="Sucgang R."/>
            <person name="Berriman M."/>
            <person name="Song J."/>
            <person name="Olsen R."/>
            <person name="Szafranski K."/>
            <person name="Xu Q."/>
            <person name="Tunggal B."/>
            <person name="Kummerfeld S."/>
            <person name="Madera M."/>
            <person name="Konfortov B.A."/>
            <person name="Rivero F."/>
            <person name="Bankier A.T."/>
            <person name="Lehmann R."/>
            <person name="Hamlin N."/>
            <person name="Davies R."/>
            <person name="Gaudet P."/>
            <person name="Fey P."/>
            <person name="Pilcher K."/>
            <person name="Chen G."/>
            <person name="Saunders D."/>
            <person name="Sodergren E.J."/>
            <person name="Davis P."/>
            <person name="Kerhornou A."/>
            <person name="Nie X."/>
            <person name="Hall N."/>
            <person name="Anjard C."/>
            <person name="Hemphill L."/>
            <person name="Bason N."/>
            <person name="Farbrother P."/>
            <person name="Desany B."/>
            <person name="Just E."/>
            <person name="Morio T."/>
            <person name="Rost R."/>
            <person name="Churcher C.M."/>
            <person name="Cooper J."/>
            <person name="Haydock S."/>
            <person name="van Driessche N."/>
            <person name="Cronin A."/>
            <person name="Goodhead I."/>
            <person name="Muzny D.M."/>
            <person name="Mourier T."/>
            <person name="Pain A."/>
            <person name="Lu M."/>
            <person name="Harper D."/>
            <person name="Lindsay R."/>
            <person name="Hauser H."/>
            <person name="James K.D."/>
            <person name="Quiles M."/>
            <person name="Madan Babu M."/>
            <person name="Saito T."/>
            <person name="Buchrieser C."/>
            <person name="Wardroper A."/>
            <person name="Felder M."/>
            <person name="Thangavelu M."/>
            <person name="Johnson D."/>
            <person name="Knights A."/>
            <person name="Loulseged H."/>
            <person name="Mungall K.L."/>
            <person name="Oliver K."/>
            <person name="Price C."/>
            <person name="Quail M.A."/>
            <person name="Urushihara H."/>
            <person name="Hernandez J."/>
            <person name="Rabbinowitsch E."/>
            <person name="Steffen D."/>
            <person name="Sanders M."/>
            <person name="Ma J."/>
            <person name="Kohara Y."/>
            <person name="Sharp S."/>
            <person name="Simmonds M.N."/>
            <person name="Spiegler S."/>
            <person name="Tivey A."/>
            <person name="Sugano S."/>
            <person name="White B."/>
            <person name="Walker D."/>
            <person name="Woodward J.R."/>
            <person name="Winckler T."/>
            <person name="Tanaka Y."/>
            <person name="Shaulsky G."/>
            <person name="Schleicher M."/>
            <person name="Weinstock G.M."/>
            <person name="Rosenthal A."/>
            <person name="Cox E.C."/>
            <person name="Chisholm R.L."/>
            <person name="Gibbs R.A."/>
            <person name="Loomis W.F."/>
            <person name="Platzer M."/>
            <person name="Kay R.R."/>
            <person name="Williams J.G."/>
            <person name="Dear P.H."/>
            <person name="Noegel A.A."/>
            <person name="Barrell B.G."/>
            <person name="Kuspa A."/>
        </authorList>
    </citation>
    <scope>NUCLEOTIDE SEQUENCE [LARGE SCALE GENOMIC DNA]</scope>
    <source>
        <strain>AX4</strain>
    </source>
</reference>
<protein>
    <recommendedName>
        <fullName>Protovillin</fullName>
    </recommendedName>
    <alternativeName>
        <fullName>100 kDa actin-binding protein</fullName>
    </alternativeName>
</protein>
<name>VILB_DICDI</name>
<keyword id="KW-0117">Actin capping</keyword>
<keyword id="KW-0009">Actin-binding</keyword>
<keyword id="KW-0963">Cytoplasm</keyword>
<keyword id="KW-0206">Cytoskeleton</keyword>
<keyword id="KW-0903">Direct protein sequencing</keyword>
<keyword id="KW-1185">Reference proteome</keyword>
<keyword id="KW-0677">Repeat</keyword>
<sequence length="959" mass="109462">MEPPLELPTQRKRVIPSKFGILKRNAEIEAEKNRENLQQSSCFSHINEIGKEIGLEIWKIIDDSTIQKVPKVNHSTFETNKSYLLLMGQFYDGNMNIKTYNIHFWIGELLINSQETINFCNDRIEELERIIKYNQKQFDSEQFYPEPILYREFQGKEGDIFMSYFKSYGGPRYVAPLKLTSASAAIATAAKQYKLFHLKGRRNIRVKQVDISSKSLNSGDVFVLDCEDFIYQWNGSESSRLEKGKGLDLTIRLRDEKSAKAKIIVMDENDTDKDHPEFWKRLGGCKDDVQKAEQGGDDFAYEKKSVEQIKLYQVENLNYEVHLHLIDPIGDVYSTTQLNAEFCYILDCETELYVWLGKASANDQRTVAMANAMDLLHEDNRPSWTPIIKMTQGSENTLFKDKFKKGSWGEYVNDNFEKKPITGKGVAAKAVQEKINVDALHNPEKYQLSKEERKSTIPTLHHVDDKHRGELKIWHVRNRNKFEISQSEFGLFYNQSCYLVLFTLFAADGSNNSILYYWQGRFSSSEDKGAAALLAKDVGKELHRSCIHVRTVQNKEPNHFLEHFQGRMVVFKGSRPNATTEVSLENLSSSLQGLYHVRGTEPINIHSIQVEKAISSLDSNDSFILVNFKNTISYIWVGKYSDEKEAALQISSNVFTGYNFQLIDEGDETSEFWESLETNSSLSLLKDYYTQLRTVEQEKKTRLFQCSNNSGVFKVFEIHDFSQDDLDSDDVMILDNQKQIFVWVGKESSDTEKLMANETALEYIMNAPTHRRDDPIFTIQDGFEPHEFTFNFHAWQVNKTQQDSYKSKLSAILGSNNSGPASPIMLPTSGVTLKPTTAATPKPITTPTVTTPKPITTPTVATLKTVTPAVTLKPTTVTTPSKVATTTNTSTPSPTTITTFYPLSVLKQKTNLPNDIDKSCLHLYLSDEEFLSTFKMTKEIFQKTPAWKTKQLRVDNGLF</sequence>
<proteinExistence type="evidence at protein level"/>
<dbReference type="EMBL" id="X74387">
    <property type="protein sequence ID" value="CAA52410.1"/>
    <property type="molecule type" value="Genomic_DNA"/>
</dbReference>
<dbReference type="EMBL" id="AAFI02000015">
    <property type="protein sequence ID" value="EAL69180.1"/>
    <property type="molecule type" value="Genomic_DNA"/>
</dbReference>
<dbReference type="PIR" id="S35061">
    <property type="entry name" value="S35061"/>
</dbReference>
<dbReference type="RefSeq" id="XP_643085.1">
    <property type="nucleotide sequence ID" value="XM_637993.1"/>
</dbReference>
<dbReference type="SMR" id="P36418"/>
<dbReference type="FunCoup" id="P36418">
    <property type="interactions" value="24"/>
</dbReference>
<dbReference type="STRING" id="44689.P36418"/>
<dbReference type="PaxDb" id="44689-DDB0185072"/>
<dbReference type="EnsemblProtists" id="EAL69180">
    <property type="protein sequence ID" value="EAL69180"/>
    <property type="gene ID" value="DDB_G0276453"/>
</dbReference>
<dbReference type="GeneID" id="8620489"/>
<dbReference type="KEGG" id="ddi:DDB_G0276453"/>
<dbReference type="dictyBase" id="DDB_G0276453">
    <property type="gene designation" value="vilB"/>
</dbReference>
<dbReference type="VEuPathDB" id="AmoebaDB:DDB_G0276453"/>
<dbReference type="eggNOG" id="KOG0443">
    <property type="taxonomic scope" value="Eukaryota"/>
</dbReference>
<dbReference type="HOGENOM" id="CLU_002568_3_1_1"/>
<dbReference type="InParanoid" id="P36418"/>
<dbReference type="OMA" id="DPNIWSA"/>
<dbReference type="PhylomeDB" id="P36418"/>
<dbReference type="Reactome" id="R-DDI-6798695">
    <property type="pathway name" value="Neutrophil degranulation"/>
</dbReference>
<dbReference type="PRO" id="PR:P36418"/>
<dbReference type="Proteomes" id="UP000002195">
    <property type="component" value="Chromosome 2"/>
</dbReference>
<dbReference type="GO" id="GO:0015629">
    <property type="term" value="C:actin cytoskeleton"/>
    <property type="evidence" value="ECO:0000318"/>
    <property type="project" value="GO_Central"/>
</dbReference>
<dbReference type="GO" id="GO:0005737">
    <property type="term" value="C:cytoplasm"/>
    <property type="evidence" value="ECO:0000318"/>
    <property type="project" value="GO_Central"/>
</dbReference>
<dbReference type="GO" id="GO:0051015">
    <property type="term" value="F:actin filament binding"/>
    <property type="evidence" value="ECO:0000318"/>
    <property type="project" value="GO_Central"/>
</dbReference>
<dbReference type="GO" id="GO:0003785">
    <property type="term" value="F:actin monomer binding"/>
    <property type="evidence" value="ECO:0000314"/>
    <property type="project" value="dictyBase"/>
</dbReference>
<dbReference type="GO" id="GO:0005546">
    <property type="term" value="F:phosphatidylinositol-4,5-bisphosphate binding"/>
    <property type="evidence" value="ECO:0000318"/>
    <property type="project" value="GO_Central"/>
</dbReference>
<dbReference type="GO" id="GO:0051014">
    <property type="term" value="P:actin filament severing"/>
    <property type="evidence" value="ECO:0000318"/>
    <property type="project" value="GO_Central"/>
</dbReference>
<dbReference type="GO" id="GO:0008154">
    <property type="term" value="P:actin polymerization or depolymerization"/>
    <property type="evidence" value="ECO:0000318"/>
    <property type="project" value="GO_Central"/>
</dbReference>
<dbReference type="GO" id="GO:0051016">
    <property type="term" value="P:barbed-end actin filament capping"/>
    <property type="evidence" value="ECO:0000314"/>
    <property type="project" value="dictyBase"/>
</dbReference>
<dbReference type="CDD" id="cd11289">
    <property type="entry name" value="gelsolin_S2_like"/>
    <property type="match status" value="1"/>
</dbReference>
<dbReference type="CDD" id="cd11292">
    <property type="entry name" value="gelsolin_S3_like"/>
    <property type="match status" value="1"/>
</dbReference>
<dbReference type="CDD" id="cd11293">
    <property type="entry name" value="gelsolin_S4_like"/>
    <property type="match status" value="1"/>
</dbReference>
<dbReference type="CDD" id="cd11288">
    <property type="entry name" value="gelsolin_S5_like"/>
    <property type="match status" value="1"/>
</dbReference>
<dbReference type="CDD" id="cd11291">
    <property type="entry name" value="gelsolin_S6_like"/>
    <property type="match status" value="1"/>
</dbReference>
<dbReference type="FunFam" id="3.40.20.10:FF:000005">
    <property type="entry name" value="Gelsolin"/>
    <property type="match status" value="1"/>
</dbReference>
<dbReference type="Gene3D" id="3.40.20.10">
    <property type="entry name" value="Severin"/>
    <property type="match status" value="6"/>
</dbReference>
<dbReference type="Gene3D" id="1.10.950.10">
    <property type="entry name" value="Villin headpiece domain"/>
    <property type="match status" value="1"/>
</dbReference>
<dbReference type="InterPro" id="IPR029006">
    <property type="entry name" value="ADF-H/Gelsolin-like_dom_sf"/>
</dbReference>
<dbReference type="InterPro" id="IPR007123">
    <property type="entry name" value="Gelsolin-like_dom"/>
</dbReference>
<dbReference type="InterPro" id="IPR007122">
    <property type="entry name" value="Villin/Gelsolin"/>
</dbReference>
<dbReference type="InterPro" id="IPR003128">
    <property type="entry name" value="Villin_headpiece"/>
</dbReference>
<dbReference type="InterPro" id="IPR036886">
    <property type="entry name" value="Villin_headpiece_dom_sf"/>
</dbReference>
<dbReference type="PANTHER" id="PTHR11977:SF31">
    <property type="entry name" value="PROTOVILLIN"/>
    <property type="match status" value="1"/>
</dbReference>
<dbReference type="PANTHER" id="PTHR11977">
    <property type="entry name" value="VILLIN"/>
    <property type="match status" value="1"/>
</dbReference>
<dbReference type="Pfam" id="PF00626">
    <property type="entry name" value="Gelsolin"/>
    <property type="match status" value="5"/>
</dbReference>
<dbReference type="Pfam" id="PF02209">
    <property type="entry name" value="VHP"/>
    <property type="match status" value="1"/>
</dbReference>
<dbReference type="PRINTS" id="PR00597">
    <property type="entry name" value="GELSOLIN"/>
</dbReference>
<dbReference type="SMART" id="SM00262">
    <property type="entry name" value="GEL"/>
    <property type="match status" value="6"/>
</dbReference>
<dbReference type="SMART" id="SM00153">
    <property type="entry name" value="VHP"/>
    <property type="match status" value="1"/>
</dbReference>
<dbReference type="SUPFAM" id="SSF55753">
    <property type="entry name" value="Actin depolymerizing proteins"/>
    <property type="match status" value="6"/>
</dbReference>
<dbReference type="SUPFAM" id="SSF47050">
    <property type="entry name" value="VHP, Villin headpiece domain"/>
    <property type="match status" value="1"/>
</dbReference>
<dbReference type="PROSITE" id="PS51089">
    <property type="entry name" value="HP"/>
    <property type="match status" value="1"/>
</dbReference>
<evidence type="ECO:0000255" key="1">
    <source>
        <dbReference type="PROSITE-ProRule" id="PRU00595"/>
    </source>
</evidence>
<evidence type="ECO:0000305" key="2"/>
<comment type="function">
    <text>Caps actin filaments but displays neither severing nor cross-linking nor nucleating activities. Protovillin seems to be a villin precursor with only archaic capping activity. It lacks essential changes in the sequence to allow bundling of actin filaments and consequently the appearance of microvilli.</text>
</comment>
<comment type="subcellular location">
    <subcellularLocation>
        <location>Cytoplasm</location>
        <location>Cytoskeleton</location>
    </subcellularLocation>
</comment>
<comment type="developmental stage">
    <text>Present in vegetative and developing cells.</text>
</comment>
<comment type="similarity">
    <text evidence="2">Belongs to the villin/gelsolin family.</text>
</comment>
<gene>
    <name type="primary">vilB</name>
    <name type="ORF">DDB_G0276453</name>
</gene>